<proteinExistence type="inferred from homology"/>
<protein>
    <recommendedName>
        <fullName evidence="1">Glutamyl-tRNA reductase</fullName>
        <shortName evidence="1">GluTR</shortName>
        <ecNumber evidence="1">1.2.1.70</ecNumber>
    </recommendedName>
</protein>
<sequence>MQIVVVGLSHRTAPVEVREKLSIPDQAISESLKSLRAYSDILEVSILSTCNRLEIYGLVKDKNIGISSIKEFLSDYSQVNCEVLTPHLFDFRQEEAVLHLMKVSAGLDSLVLGEGQILSQVKKMMRLGQENQSTGPILNRLLSQSVSAGKKVRAETNLGTGAVSISSAAVELAQLKIGQDNGIDGLVSLKGEKVLVVGAGRMSRLLITHLKSKGCNKLTLLNRNIDRAINLSGDFPDIEIICKGLDELDKSITLSSLVFTSTASEKPFIDLERIKNISLNNKLKFIDIGVPRNISNDVKQHDLIEAFDVDDLEEVVSRNQEFRQKIAKEAESLVKEERIIFLEWWASLEAVPVINKLRSDLELIRKEELQKALSRMGPDFSARERKVVEALTKGIINKILHTPVTKLRSPQSREERQASLKIVEKLFSLMDDEQK</sequence>
<feature type="chain" id="PRO_1000004664" description="Glutamyl-tRNA reductase">
    <location>
        <begin position="1"/>
        <end position="435"/>
    </location>
</feature>
<feature type="active site" description="Nucleophile" evidence="1">
    <location>
        <position position="50"/>
    </location>
</feature>
<feature type="binding site" evidence="1">
    <location>
        <begin position="49"/>
        <end position="52"/>
    </location>
    <ligand>
        <name>substrate</name>
    </ligand>
</feature>
<feature type="binding site" evidence="1">
    <location>
        <position position="109"/>
    </location>
    <ligand>
        <name>substrate</name>
    </ligand>
</feature>
<feature type="binding site" evidence="1">
    <location>
        <begin position="114"/>
        <end position="116"/>
    </location>
    <ligand>
        <name>substrate</name>
    </ligand>
</feature>
<feature type="binding site" evidence="1">
    <location>
        <position position="120"/>
    </location>
    <ligand>
        <name>substrate</name>
    </ligand>
</feature>
<feature type="binding site" evidence="1">
    <location>
        <begin position="198"/>
        <end position="203"/>
    </location>
    <ligand>
        <name>NADP(+)</name>
        <dbReference type="ChEBI" id="CHEBI:58349"/>
    </ligand>
</feature>
<feature type="site" description="Important for activity" evidence="1">
    <location>
        <position position="99"/>
    </location>
</feature>
<keyword id="KW-0149">Chlorophyll biosynthesis</keyword>
<keyword id="KW-0521">NADP</keyword>
<keyword id="KW-0560">Oxidoreductase</keyword>
<keyword id="KW-0627">Porphyrin biosynthesis</keyword>
<accession>A2BW63</accession>
<organism>
    <name type="scientific">Prochlorococcus marinus (strain MIT 9515)</name>
    <dbReference type="NCBI Taxonomy" id="167542"/>
    <lineage>
        <taxon>Bacteria</taxon>
        <taxon>Bacillati</taxon>
        <taxon>Cyanobacteriota</taxon>
        <taxon>Cyanophyceae</taxon>
        <taxon>Synechococcales</taxon>
        <taxon>Prochlorococcaceae</taxon>
        <taxon>Prochlorococcus</taxon>
    </lineage>
</organism>
<evidence type="ECO:0000255" key="1">
    <source>
        <dbReference type="HAMAP-Rule" id="MF_00087"/>
    </source>
</evidence>
<name>HEM1_PROM5</name>
<comment type="function">
    <text evidence="1">Catalyzes the NADPH-dependent reduction of glutamyl-tRNA(Glu) to glutamate 1-semialdehyde (GSA).</text>
</comment>
<comment type="catalytic activity">
    <reaction evidence="1">
        <text>(S)-4-amino-5-oxopentanoate + tRNA(Glu) + NADP(+) = L-glutamyl-tRNA(Glu) + NADPH + H(+)</text>
        <dbReference type="Rhea" id="RHEA:12344"/>
        <dbReference type="Rhea" id="RHEA-COMP:9663"/>
        <dbReference type="Rhea" id="RHEA-COMP:9680"/>
        <dbReference type="ChEBI" id="CHEBI:15378"/>
        <dbReference type="ChEBI" id="CHEBI:57501"/>
        <dbReference type="ChEBI" id="CHEBI:57783"/>
        <dbReference type="ChEBI" id="CHEBI:58349"/>
        <dbReference type="ChEBI" id="CHEBI:78442"/>
        <dbReference type="ChEBI" id="CHEBI:78520"/>
        <dbReference type="EC" id="1.2.1.70"/>
    </reaction>
</comment>
<comment type="pathway">
    <text evidence="1">Porphyrin-containing compound metabolism; protoporphyrin-IX biosynthesis; 5-aminolevulinate from L-glutamyl-tRNA(Glu): step 1/2.</text>
</comment>
<comment type="pathway">
    <text evidence="1">Porphyrin-containing compound metabolism; chlorophyll biosynthesis.</text>
</comment>
<comment type="subunit">
    <text evidence="1">Homodimer.</text>
</comment>
<comment type="domain">
    <text evidence="1">Possesses an unusual extended V-shaped dimeric structure with each monomer consisting of three distinct domains arranged along a curved 'spinal' alpha-helix. The N-terminal catalytic domain specifically recognizes the glutamate moiety of the substrate. The second domain is the NADPH-binding domain, and the third C-terminal domain is responsible for dimerization.</text>
</comment>
<comment type="miscellaneous">
    <text evidence="1">During catalysis, the active site Cys acts as a nucleophile attacking the alpha-carbonyl group of tRNA-bound glutamate with the formation of a thioester intermediate between enzyme and glutamate, and the concomitant release of tRNA(Glu). The thioester intermediate is finally reduced by direct hydride transfer from NADPH, to form the product GSA.</text>
</comment>
<comment type="similarity">
    <text evidence="1">Belongs to the glutamyl-tRNA reductase family.</text>
</comment>
<gene>
    <name evidence="1" type="primary">hemA</name>
    <name type="ordered locus">P9515_08151</name>
</gene>
<reference key="1">
    <citation type="journal article" date="2007" name="PLoS Genet.">
        <title>Patterns and implications of gene gain and loss in the evolution of Prochlorococcus.</title>
        <authorList>
            <person name="Kettler G.C."/>
            <person name="Martiny A.C."/>
            <person name="Huang K."/>
            <person name="Zucker J."/>
            <person name="Coleman M.L."/>
            <person name="Rodrigue S."/>
            <person name="Chen F."/>
            <person name="Lapidus A."/>
            <person name="Ferriera S."/>
            <person name="Johnson J."/>
            <person name="Steglich C."/>
            <person name="Church G.M."/>
            <person name="Richardson P."/>
            <person name="Chisholm S.W."/>
        </authorList>
    </citation>
    <scope>NUCLEOTIDE SEQUENCE [LARGE SCALE GENOMIC DNA]</scope>
    <source>
        <strain>MIT 9515</strain>
    </source>
</reference>
<dbReference type="EC" id="1.2.1.70" evidence="1"/>
<dbReference type="EMBL" id="CP000552">
    <property type="protein sequence ID" value="ABM72024.1"/>
    <property type="molecule type" value="Genomic_DNA"/>
</dbReference>
<dbReference type="RefSeq" id="WP_011820129.1">
    <property type="nucleotide sequence ID" value="NC_008817.1"/>
</dbReference>
<dbReference type="SMR" id="A2BW63"/>
<dbReference type="STRING" id="167542.P9515_08151"/>
<dbReference type="GeneID" id="60201973"/>
<dbReference type="KEGG" id="pmc:P9515_08151"/>
<dbReference type="eggNOG" id="COG0373">
    <property type="taxonomic scope" value="Bacteria"/>
</dbReference>
<dbReference type="HOGENOM" id="CLU_035113_2_1_3"/>
<dbReference type="OrthoDB" id="110209at2"/>
<dbReference type="UniPathway" id="UPA00251">
    <property type="reaction ID" value="UER00316"/>
</dbReference>
<dbReference type="UniPathway" id="UPA00668"/>
<dbReference type="Proteomes" id="UP000001589">
    <property type="component" value="Chromosome"/>
</dbReference>
<dbReference type="GO" id="GO:0008883">
    <property type="term" value="F:glutamyl-tRNA reductase activity"/>
    <property type="evidence" value="ECO:0007669"/>
    <property type="project" value="UniProtKB-UniRule"/>
</dbReference>
<dbReference type="GO" id="GO:0050661">
    <property type="term" value="F:NADP binding"/>
    <property type="evidence" value="ECO:0007669"/>
    <property type="project" value="InterPro"/>
</dbReference>
<dbReference type="GO" id="GO:0015995">
    <property type="term" value="P:chlorophyll biosynthetic process"/>
    <property type="evidence" value="ECO:0007669"/>
    <property type="project" value="UniProtKB-UniRule"/>
</dbReference>
<dbReference type="GO" id="GO:0006782">
    <property type="term" value="P:protoporphyrinogen IX biosynthetic process"/>
    <property type="evidence" value="ECO:0007669"/>
    <property type="project" value="UniProtKB-UniRule"/>
</dbReference>
<dbReference type="CDD" id="cd05213">
    <property type="entry name" value="NAD_bind_Glutamyl_tRNA_reduct"/>
    <property type="match status" value="1"/>
</dbReference>
<dbReference type="FunFam" id="3.30.460.30:FF:000001">
    <property type="entry name" value="Glutamyl-tRNA reductase"/>
    <property type="match status" value="1"/>
</dbReference>
<dbReference type="Gene3D" id="3.30.460.30">
    <property type="entry name" value="Glutamyl-tRNA reductase, N-terminal domain"/>
    <property type="match status" value="1"/>
</dbReference>
<dbReference type="Gene3D" id="3.40.50.720">
    <property type="entry name" value="NAD(P)-binding Rossmann-like Domain"/>
    <property type="match status" value="1"/>
</dbReference>
<dbReference type="HAMAP" id="MF_00087">
    <property type="entry name" value="Glu_tRNA_reductase"/>
    <property type="match status" value="1"/>
</dbReference>
<dbReference type="InterPro" id="IPR000343">
    <property type="entry name" value="4pyrrol_synth_GluRdtase"/>
</dbReference>
<dbReference type="InterPro" id="IPR015896">
    <property type="entry name" value="4pyrrol_synth_GluRdtase_dimer"/>
</dbReference>
<dbReference type="InterPro" id="IPR015895">
    <property type="entry name" value="4pyrrol_synth_GluRdtase_N"/>
</dbReference>
<dbReference type="InterPro" id="IPR018214">
    <property type="entry name" value="GluRdtase_CS"/>
</dbReference>
<dbReference type="InterPro" id="IPR036453">
    <property type="entry name" value="GluRdtase_dimer_dom_sf"/>
</dbReference>
<dbReference type="InterPro" id="IPR036343">
    <property type="entry name" value="GluRdtase_N_sf"/>
</dbReference>
<dbReference type="InterPro" id="IPR036291">
    <property type="entry name" value="NAD(P)-bd_dom_sf"/>
</dbReference>
<dbReference type="InterPro" id="IPR006151">
    <property type="entry name" value="Shikm_DH/Glu-tRNA_Rdtase"/>
</dbReference>
<dbReference type="NCBIfam" id="TIGR01035">
    <property type="entry name" value="hemA"/>
    <property type="match status" value="1"/>
</dbReference>
<dbReference type="NCBIfam" id="NF000744">
    <property type="entry name" value="PRK00045.1-3"/>
    <property type="match status" value="1"/>
</dbReference>
<dbReference type="PANTHER" id="PTHR43120">
    <property type="entry name" value="GLUTAMYL-TRNA REDUCTASE 1, CHLOROPLASTIC"/>
    <property type="match status" value="1"/>
</dbReference>
<dbReference type="PANTHER" id="PTHR43120:SF1">
    <property type="entry name" value="GLUTAMYL-TRNA REDUCTASE 1, CHLOROPLASTIC"/>
    <property type="match status" value="1"/>
</dbReference>
<dbReference type="Pfam" id="PF00745">
    <property type="entry name" value="GlutR_dimer"/>
    <property type="match status" value="1"/>
</dbReference>
<dbReference type="Pfam" id="PF05201">
    <property type="entry name" value="GlutR_N"/>
    <property type="match status" value="1"/>
</dbReference>
<dbReference type="Pfam" id="PF01488">
    <property type="entry name" value="Shikimate_DH"/>
    <property type="match status" value="1"/>
</dbReference>
<dbReference type="PIRSF" id="PIRSF000445">
    <property type="entry name" value="4pyrrol_synth_GluRdtase"/>
    <property type="match status" value="1"/>
</dbReference>
<dbReference type="SUPFAM" id="SSF69742">
    <property type="entry name" value="Glutamyl tRNA-reductase catalytic, N-terminal domain"/>
    <property type="match status" value="1"/>
</dbReference>
<dbReference type="SUPFAM" id="SSF69075">
    <property type="entry name" value="Glutamyl tRNA-reductase dimerization domain"/>
    <property type="match status" value="1"/>
</dbReference>
<dbReference type="SUPFAM" id="SSF51735">
    <property type="entry name" value="NAD(P)-binding Rossmann-fold domains"/>
    <property type="match status" value="1"/>
</dbReference>
<dbReference type="PROSITE" id="PS00747">
    <property type="entry name" value="GLUTR"/>
    <property type="match status" value="1"/>
</dbReference>